<sequence length="426" mass="49480">MALDILAMAPLYQAPAITRIGPKTDPSKRPADPLKPLVPSRTKLTTIEAKRIMSILDEAINKVELVTLLSYVASNREDVEGVLGEDIMRAVREHEEEAEEEGWLRDRLLSIELQKSSLSPLTQQIKDSTKNVLRLLLSNPQAARLLQMQTQSRSAEAQNFIDSLIELRGFLFEKLVTSPMEARDKAQFIQDINRQNSNNQQIIDTLENELAERMKKRNAEVEKENFVIQELKNHLHQVLKFSENSLLRTKQEAEKQQKADFRASQARVAKIQQEILQLQSQFYNLVMENREAEQALRKKKYKVETEIENWIQKYDTEMGEKQEELEDLEAVHKEEKIALEELKRRHKVLVEEFVQIREEREINSKKRMEAEQEMVRMVRAATLIQAFWKGYLVRSLLRSKKKRGKGKAKGKEKGKQKGKEKGKGKK</sequence>
<dbReference type="EMBL" id="AB168312">
    <property type="protein sequence ID" value="BAE00436.1"/>
    <property type="molecule type" value="mRNA"/>
</dbReference>
<dbReference type="RefSeq" id="NP_001270694.1">
    <property type="nucleotide sequence ID" value="NM_001283765.1"/>
</dbReference>
<dbReference type="SMR" id="Q4R8Y5"/>
<dbReference type="STRING" id="9541.ENSMFAP00000003468"/>
<dbReference type="Ensembl" id="ENSMFAT00000022132.2">
    <property type="protein sequence ID" value="ENSMFAP00000003472.2"/>
    <property type="gene ID" value="ENSMFAG00000001483.2"/>
</dbReference>
<dbReference type="eggNOG" id="ENOG502QQS9">
    <property type="taxonomic scope" value="Eukaryota"/>
</dbReference>
<dbReference type="GeneTree" id="ENSGT00730000111354"/>
<dbReference type="Proteomes" id="UP000233100">
    <property type="component" value="Chromosome 11"/>
</dbReference>
<dbReference type="Bgee" id="ENSMFAG00000001483">
    <property type="expression patterns" value="Expressed in bone marrow and 3 other cell types or tissues"/>
</dbReference>
<dbReference type="GO" id="GO:0036064">
    <property type="term" value="C:ciliary basal body"/>
    <property type="evidence" value="ECO:0007669"/>
    <property type="project" value="Ensembl"/>
</dbReference>
<dbReference type="GO" id="GO:0005737">
    <property type="term" value="C:cytoplasm"/>
    <property type="evidence" value="ECO:0007669"/>
    <property type="project" value="UniProtKB-KW"/>
</dbReference>
<dbReference type="GO" id="GO:0031514">
    <property type="term" value="C:motile cilium"/>
    <property type="evidence" value="ECO:0007669"/>
    <property type="project" value="UniProtKB-KW"/>
</dbReference>
<dbReference type="CDD" id="cd23767">
    <property type="entry name" value="IQCD"/>
    <property type="match status" value="1"/>
</dbReference>
<dbReference type="Gene3D" id="1.20.5.190">
    <property type="match status" value="1"/>
</dbReference>
<dbReference type="InterPro" id="IPR042815">
    <property type="entry name" value="DRC10"/>
</dbReference>
<dbReference type="InterPro" id="IPR000048">
    <property type="entry name" value="IQ_motif_EF-hand-BS"/>
</dbReference>
<dbReference type="PANTHER" id="PTHR31598:SF1">
    <property type="entry name" value="DYNEIN REGULATORY COMPLEX PROTEIN 10"/>
    <property type="match status" value="1"/>
</dbReference>
<dbReference type="PANTHER" id="PTHR31598">
    <property type="entry name" value="IQ DOMAIN-CONTAINING PROTEIN D"/>
    <property type="match status" value="1"/>
</dbReference>
<dbReference type="Pfam" id="PF00612">
    <property type="entry name" value="IQ"/>
    <property type="match status" value="1"/>
</dbReference>
<dbReference type="SMART" id="SM00015">
    <property type="entry name" value="IQ"/>
    <property type="match status" value="1"/>
</dbReference>
<dbReference type="PROSITE" id="PS50096">
    <property type="entry name" value="IQ"/>
    <property type="match status" value="1"/>
</dbReference>
<comment type="function">
    <text evidence="1">Component of the nexin-dynein regulatory complex (N-DRC), a key regulator of ciliary/flagellar motility which maintains the alignment and integrity of the distal axoneme and regulates microtubule sliding in motile axonemes.</text>
</comment>
<comment type="subunit">
    <text evidence="1 2">Component of the nexin-dynein regulatory complex (N-DRC). Interacts with CFAP52 (By similarity).</text>
</comment>
<comment type="subcellular location">
    <subcellularLocation>
        <location evidence="1">Cytoplasm</location>
        <location evidence="1">Cytoskeleton</location>
        <location evidence="1">Flagellum axoneme</location>
    </subcellularLocation>
</comment>
<comment type="similarity">
    <text evidence="5">Belongs to the DRC10 family.</text>
</comment>
<proteinExistence type="evidence at transcript level"/>
<evidence type="ECO:0000250" key="1">
    <source>
        <dbReference type="UniProtKB" id="A8J0N6"/>
    </source>
</evidence>
<evidence type="ECO:0000250" key="2">
    <source>
        <dbReference type="UniProtKB" id="F1RKB1"/>
    </source>
</evidence>
<evidence type="ECO:0000255" key="3">
    <source>
        <dbReference type="PROSITE-ProRule" id="PRU00116"/>
    </source>
</evidence>
<evidence type="ECO:0000256" key="4">
    <source>
        <dbReference type="SAM" id="MobiDB-lite"/>
    </source>
</evidence>
<evidence type="ECO:0000305" key="5"/>
<name>DRC10_MACFA</name>
<protein>
    <recommendedName>
        <fullName evidence="1">Dynein regulatory complex protein 10</fullName>
    </recommendedName>
    <alternativeName>
        <fullName>IQ domain-containing protein D</fullName>
    </alternativeName>
</protein>
<reference key="1">
    <citation type="submission" date="2005-06" db="EMBL/GenBank/DDBJ databases">
        <title>DNA sequences of macaque genes expressed in brain or testis and its evolutionary implications.</title>
        <authorList>
            <consortium name="International consortium for macaque cDNA sequencing and analysis"/>
        </authorList>
    </citation>
    <scope>NUCLEOTIDE SEQUENCE [LARGE SCALE MRNA]</scope>
    <source>
        <tissue>Testis</tissue>
    </source>
</reference>
<organism>
    <name type="scientific">Macaca fascicularis</name>
    <name type="common">Crab-eating macaque</name>
    <name type="synonym">Cynomolgus monkey</name>
    <dbReference type="NCBI Taxonomy" id="9541"/>
    <lineage>
        <taxon>Eukaryota</taxon>
        <taxon>Metazoa</taxon>
        <taxon>Chordata</taxon>
        <taxon>Craniata</taxon>
        <taxon>Vertebrata</taxon>
        <taxon>Euteleostomi</taxon>
        <taxon>Mammalia</taxon>
        <taxon>Eutheria</taxon>
        <taxon>Euarchontoglires</taxon>
        <taxon>Primates</taxon>
        <taxon>Haplorrhini</taxon>
        <taxon>Catarrhini</taxon>
        <taxon>Cercopithecidae</taxon>
        <taxon>Cercopithecinae</taxon>
        <taxon>Macaca</taxon>
    </lineage>
</organism>
<gene>
    <name type="primary">IQCD</name>
    <name evidence="1" type="synonym">DRC10</name>
    <name type="ORF">QtsA-11128</name>
</gene>
<accession>Q4R8Y5</accession>
<keyword id="KW-0966">Cell projection</keyword>
<keyword id="KW-0969">Cilium</keyword>
<keyword id="KW-0963">Cytoplasm</keyword>
<keyword id="KW-0206">Cytoskeleton</keyword>
<keyword id="KW-0282">Flagellum</keyword>
<keyword id="KW-1185">Reference proteome</keyword>
<feature type="chain" id="PRO_0000282549" description="Dynein regulatory complex protein 10">
    <location>
        <begin position="1"/>
        <end position="426"/>
    </location>
</feature>
<feature type="domain" description="IQ" evidence="3">
    <location>
        <begin position="377"/>
        <end position="406"/>
    </location>
</feature>
<feature type="region of interest" description="Disordered" evidence="4">
    <location>
        <begin position="18"/>
        <end position="37"/>
    </location>
</feature>
<feature type="region of interest" description="Disordered" evidence="4">
    <location>
        <begin position="399"/>
        <end position="426"/>
    </location>
</feature>
<feature type="compositionally biased region" description="Basic residues" evidence="4">
    <location>
        <begin position="399"/>
        <end position="408"/>
    </location>
</feature>
<feature type="compositionally biased region" description="Basic and acidic residues" evidence="4">
    <location>
        <begin position="409"/>
        <end position="426"/>
    </location>
</feature>